<comment type="function">
    <text>Involved in intracellular signal transduction mediated by cytokines and growth factors. Upon IL-2 and GM-CSL stimulation, it plays a role in signaling leading to DNA synthesis and MYC induction. May also play a role in T-cell development. Involved in down-regulation of receptor tyrosine kinase via multivesicular body (MVBs) when complexed with HGS (ESCRT-0 complex). The ESCRT-0 complex binds ubiquitin and acts as a sorting machinery that recognizes ubiquitinated receptors and transfers them to further sequential lysosomal sorting/trafficking processes.</text>
</comment>
<comment type="function">
    <text evidence="14">(Microbial infection) Plays an important role in Dengue virus entry.</text>
</comment>
<comment type="subunit">
    <text evidence="5 6 7 9 10 11 12 13 14 16">Component of the ESCRT-0 complex composed of STAM or STAM2 and HGS (PubMed:11687594, PubMed:19278655, PubMed:9407053). Probably part of a complex at least composed of HSG, STAM and EPS15 (PubMed:12551915). Found in a complex with HGS and E3 ligase ITCH and DTX3L (PubMed:24790097). Interacts with E3 ligase DTX3L; the interaction brings together STAM and HSG, promotes their recruitment to early endosomes and decreases STAM and HGS ubiquitination by ITCH (PubMed:24790097). Interacts with STAMBP/AMSH (PubMed:10383417). Interacts with PDGFRB (PubMed:20494825). Interacts with LITAF; the interaction is direct (PubMed:23166352). Identified in a complex with HGS and LITAF (PubMed:23166352). Interacts with HAVCR1 (PubMed:29742433).</text>
</comment>
<comment type="interaction">
    <interactant intactId="EBI-752333">
        <id>Q92783</id>
    </interactant>
    <interactant intactId="EBI-740220">
        <id>O14964</id>
        <label>HGS</label>
    </interactant>
    <organismsDiffer>false</organismsDiffer>
    <experiments>8</experiments>
</comment>
<comment type="interaction">
    <interactant intactId="EBI-752333">
        <id>Q92783</id>
    </interactant>
    <interactant intactId="EBI-346946">
        <id>Q13094</id>
        <label>LCP2</label>
    </interactant>
    <organismsDiffer>false</organismsDiffer>
    <experiments>3</experiments>
</comment>
<comment type="interaction">
    <interactant intactId="EBI-752333">
        <id>Q92783</id>
    </interactant>
    <interactant intactId="EBI-396676">
        <id>O95630</id>
        <label>STAMBP</label>
    </interactant>
    <organismsDiffer>false</organismsDiffer>
    <experiments>7</experiments>
</comment>
<comment type="interaction">
    <interactant intactId="EBI-752333">
        <id>Q92783</id>
    </interactant>
    <interactant intactId="EBI-3390054">
        <id>P0CG48</id>
        <label>UBC</label>
    </interactant>
    <organismsDiffer>false</organismsDiffer>
    <experiments>2</experiments>
</comment>
<comment type="interaction">
    <interactant intactId="EBI-752333">
        <id>Q92783</id>
    </interactant>
    <interactant intactId="EBI-5333021">
        <id>P0CG53</id>
        <label>UBB</label>
    </interactant>
    <organismsDiffer>true</organismsDiffer>
    <experiments>9</experiments>
</comment>
<comment type="interaction">
    <interactant intactId="EBI-15763634">
        <id>Q92783-1</id>
    </interactant>
    <interactant intactId="EBI-740220">
        <id>O14964</id>
        <label>HGS</label>
    </interactant>
    <organismsDiffer>false</organismsDiffer>
    <experiments>5</experiments>
</comment>
<comment type="interaction">
    <interactant intactId="EBI-15763634">
        <id>Q92783-1</id>
    </interactant>
    <interactant intactId="EBI-2119135">
        <id>Q99LI8</id>
        <label>Hgs</label>
    </interactant>
    <organismsDiffer>true</organismsDiffer>
    <experiments>4</experiments>
</comment>
<comment type="interaction">
    <interactant intactId="EBI-12025738">
        <id>Q92783-2</id>
    </interactant>
    <interactant intactId="EBI-25837549">
        <id>P28329-3</id>
        <label>CHAT</label>
    </interactant>
    <organismsDiffer>false</organismsDiffer>
    <experiments>3</experiments>
</comment>
<comment type="interaction">
    <interactant intactId="EBI-12025738">
        <id>Q92783-2</id>
    </interactant>
    <interactant intactId="EBI-348399">
        <id>P22607</id>
        <label>FGFR3</label>
    </interactant>
    <organismsDiffer>false</organismsDiffer>
    <experiments>3</experiments>
</comment>
<comment type="interaction">
    <interactant intactId="EBI-12025738">
        <id>Q92783-2</id>
    </interactant>
    <interactant intactId="EBI-740220">
        <id>O14964</id>
        <label>HGS</label>
    </interactant>
    <organismsDiffer>false</organismsDiffer>
    <experiments>3</experiments>
</comment>
<comment type="interaction">
    <interactant intactId="EBI-12025738">
        <id>Q92783-2</id>
    </interactant>
    <interactant intactId="EBI-350145">
        <id>P01112</id>
        <label>HRAS</label>
    </interactant>
    <organismsDiffer>false</organismsDiffer>
    <experiments>3</experiments>
</comment>
<comment type="interaction">
    <interactant intactId="EBI-12025738">
        <id>Q92783-2</id>
    </interactant>
    <interactant intactId="EBI-4314821">
        <id>Q13449</id>
        <label>LSAMP</label>
    </interactant>
    <organismsDiffer>false</organismsDiffer>
    <experiments>3</experiments>
</comment>
<comment type="interaction">
    <interactant intactId="EBI-12025738">
        <id>Q92783-2</id>
    </interactant>
    <interactant intactId="EBI-2811583">
        <id>Q9BVL2</id>
        <label>NUP58</label>
    </interactant>
    <organismsDiffer>false</organismsDiffer>
    <experiments>3</experiments>
</comment>
<comment type="interaction">
    <interactant intactId="EBI-12025738">
        <id>Q92783-2</id>
    </interactant>
    <interactant intactId="EBI-396669">
        <id>Q9Y3C5</id>
        <label>RNF11</label>
    </interactant>
    <organismsDiffer>false</organismsDiffer>
    <experiments>3</experiments>
</comment>
<comment type="subcellular location">
    <subcellularLocation>
        <location evidence="18">Cytoplasm</location>
    </subcellularLocation>
    <subcellularLocation>
        <location evidence="12 13">Early endosome membrane</location>
        <topology evidence="19 20">Peripheral membrane protein</topology>
        <orientation evidence="19 20">Cytoplasmic side</orientation>
    </subcellularLocation>
</comment>
<comment type="alternative products">
    <event type="alternative splicing"/>
    <isoform>
        <id>Q92783-1</id>
        <name>1</name>
        <sequence type="displayed"/>
    </isoform>
    <isoform>
        <id>Q92783-2</id>
        <name>2</name>
        <sequence type="described" ref="VSP_014846 VSP_014847"/>
    </isoform>
</comment>
<comment type="tissue specificity">
    <text evidence="15">Ubiquitously expressed.</text>
</comment>
<comment type="domain">
    <text evidence="10">The VHS domain mediates high-avidity binding to Lys63-linked and Lys48-linked polyubiquitinated cargos.</text>
</comment>
<comment type="PTM">
    <text evidence="6 11">Phosphorylated on Tyr-198. Phosphorylated in response to IL2, IL3, IL4, IL7, CSF2/GM-CSF, EGF and PDGFB. Phosphorylated by activated PDGFRB.</text>
</comment>
<comment type="PTM">
    <text evidence="13">Ubiquitinated by ITCH.</text>
</comment>
<comment type="similarity">
    <text evidence="18">Belongs to the STAM family.</text>
</comment>
<feature type="initiator methionine" description="Removed" evidence="6 15">
    <location>
        <position position="1"/>
    </location>
</feature>
<feature type="chain" id="PRO_0000190145" description="Signal transducing adapter molecule 1">
    <location>
        <begin position="2"/>
        <end position="540"/>
    </location>
</feature>
<feature type="domain" description="VHS" evidence="3">
    <location>
        <begin position="16"/>
        <end position="143"/>
    </location>
</feature>
<feature type="domain" description="UIM" evidence="2">
    <location>
        <begin position="171"/>
        <end position="190"/>
    </location>
</feature>
<feature type="domain" description="SH3" evidence="1">
    <location>
        <begin position="210"/>
        <end position="269"/>
    </location>
</feature>
<feature type="domain" description="ITAM">
    <location>
        <begin position="370"/>
        <end position="387"/>
    </location>
</feature>
<feature type="region of interest" description="Disordered" evidence="4">
    <location>
        <begin position="500"/>
        <end position="540"/>
    </location>
</feature>
<feature type="compositionally biased region" description="Polar residues" evidence="4">
    <location>
        <begin position="500"/>
        <end position="518"/>
    </location>
</feature>
<feature type="compositionally biased region" description="Low complexity" evidence="4">
    <location>
        <begin position="519"/>
        <end position="540"/>
    </location>
</feature>
<feature type="modified residue" description="Phosphoserine" evidence="21 22">
    <location>
        <position position="156"/>
    </location>
</feature>
<feature type="modified residue" description="Phosphotyrosine" evidence="6">
    <location>
        <position position="198"/>
    </location>
</feature>
<feature type="modified residue" description="Phosphotyrosine" evidence="11">
    <location>
        <position position="381"/>
    </location>
</feature>
<feature type="modified residue" description="Phosphotyrosine" evidence="11">
    <location>
        <position position="384"/>
    </location>
</feature>
<feature type="cross-link" description="Glycyl lysine isopeptide (Lys-Gly) (interchain with G-Cter in SUMO2)" evidence="23">
    <location>
        <position position="276"/>
    </location>
</feature>
<feature type="splice variant" id="VSP_014846" description="In isoform 2." evidence="17">
    <original>YYMQSSGVSGSQ</original>
    <variation>GSGPTIRKPSPS</variation>
    <location>
        <begin position="392"/>
        <end position="403"/>
    </location>
</feature>
<feature type="splice variant" id="VSP_014847" description="In isoform 2." evidence="17">
    <location>
        <begin position="404"/>
        <end position="540"/>
    </location>
</feature>
<feature type="sequence variant" id="VAR_036348" description="In a colorectal cancer sample; somatic mutation; dbSNP:rs1554827317." evidence="8">
    <original>G</original>
    <variation>D</variation>
    <location>
        <position position="212"/>
    </location>
</feature>
<feature type="sequence conflict" description="In Ref. 4; AAH30586." evidence="18" ref="4">
    <original>D</original>
    <variation>Y</variation>
    <location>
        <position position="267"/>
    </location>
</feature>
<feature type="helix" evidence="26">
    <location>
        <begin position="10"/>
        <end position="16"/>
    </location>
</feature>
<feature type="strand" evidence="26">
    <location>
        <begin position="21"/>
        <end position="23"/>
    </location>
</feature>
<feature type="helix" evidence="26">
    <location>
        <begin position="26"/>
        <end position="36"/>
    </location>
</feature>
<feature type="helix" evidence="26">
    <location>
        <begin position="42"/>
        <end position="54"/>
    </location>
</feature>
<feature type="helix" evidence="26">
    <location>
        <begin position="59"/>
        <end position="75"/>
    </location>
</feature>
<feature type="helix" evidence="26">
    <location>
        <begin position="78"/>
        <end position="84"/>
    </location>
</feature>
<feature type="helix" evidence="26">
    <location>
        <begin position="87"/>
        <end position="99"/>
    </location>
</feature>
<feature type="helix" evidence="26">
    <location>
        <begin position="102"/>
        <end position="119"/>
    </location>
</feature>
<feature type="helix" evidence="26">
    <location>
        <begin position="123"/>
        <end position="125"/>
    </location>
</feature>
<feature type="helix" evidence="26">
    <location>
        <begin position="127"/>
        <end position="137"/>
    </location>
</feature>
<feature type="strand" evidence="24">
    <location>
        <begin position="213"/>
        <end position="219"/>
    </location>
</feature>
<feature type="strand" evidence="24">
    <location>
        <begin position="236"/>
        <end position="244"/>
    </location>
</feature>
<feature type="strand" evidence="24">
    <location>
        <begin position="247"/>
        <end position="251"/>
    </location>
</feature>
<feature type="strand" evidence="24">
    <location>
        <begin position="256"/>
        <end position="258"/>
    </location>
</feature>
<feature type="strand" evidence="24">
    <location>
        <begin position="264"/>
        <end position="266"/>
    </location>
</feature>
<feature type="helix" evidence="25">
    <location>
        <begin position="304"/>
        <end position="315"/>
    </location>
</feature>
<feature type="helix" evidence="25">
    <location>
        <begin position="327"/>
        <end position="375"/>
    </location>
</feature>
<reference key="1">
    <citation type="journal article" date="1996" name="Biochem. Biophys. Res. Commun.">
        <title>Cloning of a novel signal-transducing adaptor molecule containing an SH3 domain and ITAM.</title>
        <authorList>
            <person name="Takeshita T."/>
            <person name="Arita T."/>
            <person name="Asao H."/>
            <person name="Tanaka N."/>
            <person name="Higuchi M."/>
            <person name="Kuroda H."/>
            <person name="Kaneko K."/>
            <person name="Munakata H."/>
            <person name="Endo Y."/>
            <person name="Fujita T."/>
            <person name="Sugamura K."/>
        </authorList>
    </citation>
    <scope>NUCLEOTIDE SEQUENCE [MRNA] (ISOFORM 1)</scope>
    <scope>PROTEIN SEQUENCE OF 2-15; 110-119; 137-154; 215-223; 233-247 AND 364-373</scope>
    <scope>TISSUE SPECIFICITY</scope>
    <source>
        <tissue>T-cell</tissue>
    </source>
</reference>
<reference key="2">
    <citation type="submission" date="2007-02" db="EMBL/GenBank/DDBJ databases">
        <authorList>
            <consortium name="NHLBI resequencing and genotyping service (RS&amp;G)"/>
        </authorList>
    </citation>
    <scope>NUCLEOTIDE SEQUENCE [GENOMIC DNA]</scope>
</reference>
<reference key="3">
    <citation type="submission" date="2005-09" db="EMBL/GenBank/DDBJ databases">
        <authorList>
            <person name="Mural R.J."/>
            <person name="Istrail S."/>
            <person name="Sutton G.G."/>
            <person name="Florea L."/>
            <person name="Halpern A.L."/>
            <person name="Mobarry C.M."/>
            <person name="Lippert R."/>
            <person name="Walenz B."/>
            <person name="Shatkay H."/>
            <person name="Dew I."/>
            <person name="Miller J.R."/>
            <person name="Flanigan M.J."/>
            <person name="Edwards N.J."/>
            <person name="Bolanos R."/>
            <person name="Fasulo D."/>
            <person name="Halldorsson B.V."/>
            <person name="Hannenhalli S."/>
            <person name="Turner R."/>
            <person name="Yooseph S."/>
            <person name="Lu F."/>
            <person name="Nusskern D.R."/>
            <person name="Shue B.C."/>
            <person name="Zheng X.H."/>
            <person name="Zhong F."/>
            <person name="Delcher A.L."/>
            <person name="Huson D.H."/>
            <person name="Kravitz S.A."/>
            <person name="Mouchard L."/>
            <person name="Reinert K."/>
            <person name="Remington K.A."/>
            <person name="Clark A.G."/>
            <person name="Waterman M.S."/>
            <person name="Eichler E.E."/>
            <person name="Adams M.D."/>
            <person name="Hunkapiller M.W."/>
            <person name="Myers E.W."/>
            <person name="Venter J.C."/>
        </authorList>
    </citation>
    <scope>NUCLEOTIDE SEQUENCE [LARGE SCALE GENOMIC DNA]</scope>
</reference>
<reference key="4">
    <citation type="journal article" date="2004" name="Genome Res.">
        <title>The status, quality, and expansion of the NIH full-length cDNA project: the Mammalian Gene Collection (MGC).</title>
        <authorList>
            <consortium name="The MGC Project Team"/>
        </authorList>
    </citation>
    <scope>NUCLEOTIDE SEQUENCE [LARGE SCALE MRNA] (ISOFORM 2)</scope>
    <source>
        <tissue>Brain</tissue>
    </source>
</reference>
<reference key="5">
    <citation type="journal article" date="2002" name="J. Biol. Chem.">
        <title>Tyrosine phosphorylation mapping of the epidermal growth factor receptor signaling pathway.</title>
        <authorList>
            <person name="Steen H."/>
            <person name="Kuster B."/>
            <person name="Fernandez M."/>
            <person name="Pandey A."/>
            <person name="Mann M."/>
        </authorList>
    </citation>
    <scope>PROTEIN SEQUENCE OF 189-213</scope>
    <scope>INTERACTION WITH HGS</scope>
    <scope>CLEAVAGE OF INITIATOR METHIONINE</scope>
    <scope>PHOSPHORYLATION AT TYR-198</scope>
    <scope>IDENTIFICATION BY MASS SPECTROMETRY</scope>
</reference>
<reference key="6">
    <citation type="journal article" date="1997" name="J. Biol. Chem.">
        <title>Hrs is associated with STAM, a signal-transducing adaptor molecule. Its suppressive effect on cytokine-induced cell growth.</title>
        <authorList>
            <person name="Asao H."/>
            <person name="Sasaki Y."/>
            <person name="Arita T."/>
            <person name="Tanaka N."/>
            <person name="Endo K."/>
            <person name="Kasai H."/>
            <person name="Takeshita T."/>
            <person name="Endo Y."/>
            <person name="Fujita T."/>
            <person name="Sugamura K."/>
        </authorList>
    </citation>
    <scope>INTERACTION WITH HGS</scope>
</reference>
<reference key="7">
    <citation type="journal article" date="1999" name="J. Biol. Chem.">
        <title>Possible involvement of a novel STAM-associated molecule 'AMSH' in intracellular signal transduction mediated by cytokines.</title>
        <authorList>
            <person name="Tanaka N."/>
            <person name="Kaneko K."/>
            <person name="Asao H."/>
            <person name="Kasai H."/>
            <person name="Endo Y."/>
            <person name="Fujita T."/>
            <person name="Takeshita T."/>
            <person name="Sugamura K."/>
        </authorList>
    </citation>
    <scope>INTERACTION WITH STAMBP</scope>
</reference>
<reference key="8">
    <citation type="journal article" date="2003" name="J. Biol. Chem.">
        <title>STAM and Hrs are subunits of a multivalent ubiquitin-binding complex on early endosomes.</title>
        <authorList>
            <person name="Bache K.G."/>
            <person name="Raiborg C."/>
            <person name="Mehlum A."/>
            <person name="Stenmark H."/>
        </authorList>
    </citation>
    <scope>INTERACTION WITH HGS</scope>
    <scope>IDENTIFICATION IN A COMPLEX WITH HGS AND EPS15</scope>
</reference>
<reference key="9">
    <citation type="journal article" date="2006" name="Cell">
        <title>Global, in vivo, and site-specific phosphorylation dynamics in signaling networks.</title>
        <authorList>
            <person name="Olsen J.V."/>
            <person name="Blagoev B."/>
            <person name="Gnad F."/>
            <person name="Macek B."/>
            <person name="Kumar C."/>
            <person name="Mortensen P."/>
            <person name="Mann M."/>
        </authorList>
    </citation>
    <scope>IDENTIFICATION BY MASS SPECTROMETRY [LARGE SCALE ANALYSIS]</scope>
    <source>
        <tissue>Cervix carcinoma</tissue>
    </source>
</reference>
<reference key="10">
    <citation type="journal article" date="2010" name="Cell. Signal.">
        <title>Mutation of tyrosine residue 857 in the PDGF beta-receptor affects cell proliferation but not migration.</title>
        <authorList>
            <person name="Wardega P."/>
            <person name="Heldin C.H."/>
            <person name="Lennartsson J."/>
        </authorList>
    </citation>
    <scope>INTERACTION WITH PDGFRB</scope>
    <scope>PHOSPHORYLATION AT TYR-381 AND TYR-384</scope>
</reference>
<reference key="11">
    <citation type="journal article" date="2010" name="Sci. Signal.">
        <title>Quantitative phosphoproteomics reveals widespread full phosphorylation site occupancy during mitosis.</title>
        <authorList>
            <person name="Olsen J.V."/>
            <person name="Vermeulen M."/>
            <person name="Santamaria A."/>
            <person name="Kumar C."/>
            <person name="Miller M.L."/>
            <person name="Jensen L.J."/>
            <person name="Gnad F."/>
            <person name="Cox J."/>
            <person name="Jensen T.S."/>
            <person name="Nigg E.A."/>
            <person name="Brunak S."/>
            <person name="Mann M."/>
        </authorList>
    </citation>
    <scope>PHOSPHORYLATION [LARGE SCALE ANALYSIS] AT SER-156</scope>
    <scope>IDENTIFICATION BY MASS SPECTROMETRY [LARGE SCALE ANALYSIS]</scope>
    <source>
        <tissue>Cervix carcinoma</tissue>
    </source>
</reference>
<reference key="12">
    <citation type="journal article" date="2011" name="BMC Syst. Biol.">
        <title>Initial characterization of the human central proteome.</title>
        <authorList>
            <person name="Burkard T.R."/>
            <person name="Planyavsky M."/>
            <person name="Kaupe I."/>
            <person name="Breitwieser F.P."/>
            <person name="Buerckstuemmer T."/>
            <person name="Bennett K.L."/>
            <person name="Superti-Furga G."/>
            <person name="Colinge J."/>
        </authorList>
    </citation>
    <scope>IDENTIFICATION BY MASS SPECTROMETRY [LARGE SCALE ANALYSIS]</scope>
</reference>
<reference key="13">
    <citation type="journal article" date="2012" name="J. Cell Biol.">
        <title>Charcot-Marie-Tooth disease-linked protein SIMPLE functions with the ESCRT machinery in endosomal trafficking.</title>
        <authorList>
            <person name="Lee S.M."/>
            <person name="Chin L.S."/>
            <person name="Li L."/>
        </authorList>
    </citation>
    <scope>INTERACTION WITH LITAF</scope>
    <scope>IDENTIFICATION IN A COMPLEX WITH HGS AND LITAF</scope>
    <scope>SUBCELLULAR LOCATION</scope>
</reference>
<reference key="14">
    <citation type="journal article" date="2013" name="J. Proteome Res.">
        <title>Toward a comprehensive characterization of a human cancer cell phosphoproteome.</title>
        <authorList>
            <person name="Zhou H."/>
            <person name="Di Palma S."/>
            <person name="Preisinger C."/>
            <person name="Peng M."/>
            <person name="Polat A.N."/>
            <person name="Heck A.J."/>
            <person name="Mohammed S."/>
        </authorList>
    </citation>
    <scope>PHOSPHORYLATION [LARGE SCALE ANALYSIS] AT SER-156</scope>
    <scope>IDENTIFICATION BY MASS SPECTROMETRY [LARGE SCALE ANALYSIS]</scope>
    <source>
        <tissue>Cervix carcinoma</tissue>
    </source>
</reference>
<reference key="15">
    <citation type="journal article" date="2014" name="J. Proteomics">
        <title>An enzyme assisted RP-RPLC approach for in-depth analysis of human liver phosphoproteome.</title>
        <authorList>
            <person name="Bian Y."/>
            <person name="Song C."/>
            <person name="Cheng K."/>
            <person name="Dong M."/>
            <person name="Wang F."/>
            <person name="Huang J."/>
            <person name="Sun D."/>
            <person name="Wang L."/>
            <person name="Ye M."/>
            <person name="Zou H."/>
        </authorList>
    </citation>
    <scope>IDENTIFICATION BY MASS SPECTROMETRY [LARGE SCALE ANALYSIS]</scope>
    <source>
        <tissue>Liver</tissue>
    </source>
</reference>
<reference key="16">
    <citation type="journal article" date="2014" name="Mol. Biol. Cell">
        <title>The ubiquitin ligase deltex-3l regulates endosomal sorting of the G protein-coupled receptor CXCR4.</title>
        <authorList>
            <person name="Holleman J."/>
            <person name="Marchese A."/>
        </authorList>
    </citation>
    <scope>INTERACTION WITH DTX3L</scope>
    <scope>IDENTIFICATION IN A COMPLEX WITH DTX3L; HGS AND ITCH</scope>
    <scope>SUBCELLULAR LOCATION</scope>
    <scope>UBIQUITINATION</scope>
</reference>
<reference key="17">
    <citation type="journal article" date="2017" name="Nat. Struct. Mol. Biol.">
        <title>Site-specific mapping of the human SUMO proteome reveals co-modification with phosphorylation.</title>
        <authorList>
            <person name="Hendriks I.A."/>
            <person name="Lyon D."/>
            <person name="Young C."/>
            <person name="Jensen L.J."/>
            <person name="Vertegaal A.C."/>
            <person name="Nielsen M.L."/>
        </authorList>
    </citation>
    <scope>SUMOYLATION [LARGE SCALE ANALYSIS] AT LYS-276</scope>
    <scope>IDENTIFICATION BY MASS SPECTROMETRY [LARGE SCALE ANALYSIS]</scope>
</reference>
<reference key="18">
    <citation type="journal article" date="2018" name="Cell Rep.">
        <title>TIM-1 Ubiquitination Mediates Dengue Virus Entry.</title>
        <authorList>
            <person name="Dejarnac O."/>
            <person name="Hafirassou M.L."/>
            <person name="Chazal M."/>
            <person name="Versapuech M."/>
            <person name="Gaillard J."/>
            <person name="Perera-Lecoin M."/>
            <person name="Umana-Diaz C."/>
            <person name="Bonnet-Madin L."/>
            <person name="Carnec X."/>
            <person name="Tinevez J.Y."/>
            <person name="Delaugerre C."/>
            <person name="Schwartz O."/>
            <person name="Roingeard P."/>
            <person name="Jouvenet N."/>
            <person name="Berlioz-Torrent C."/>
            <person name="Meertens L."/>
            <person name="Amara A."/>
        </authorList>
    </citation>
    <scope>INTERACTION WITH HAVCR1</scope>
    <scope>FUNCTION (MICROBIAL INFECTION)</scope>
</reference>
<reference key="19">
    <citation type="journal article" date="2009" name="Structure">
        <title>Hybrid structural model of the complete human ESCRT-0 complex.</title>
        <authorList>
            <person name="Ren X."/>
            <person name="Kloer D.P."/>
            <person name="Kim Y.C."/>
            <person name="Ghirlando R."/>
            <person name="Saidi L.F."/>
            <person name="Hummer G."/>
            <person name="Hurley J.H."/>
        </authorList>
    </citation>
    <scope>X-RAY CRYSTALLOGRAPHY (2.30 ANGSTROMS) OF 301-377 IN COMPLEX WITH STAM</scope>
    <scope>SUBUNIT</scope>
    <scope>INTERACTION WITH STAM</scope>
</reference>
<reference key="20">
    <citation type="journal article" date="2010" name="EMBO J.">
        <title>VHS domains of ESCRT-0 cooperate in high-avidity binding to polyubiquitinated cargo.</title>
        <authorList>
            <person name="Ren X."/>
            <person name="Hurley J.H."/>
        </authorList>
    </citation>
    <scope>X-RAY CRYSTALLOGRAPHY (2.6 ANGSTROMS) OF 4-143 IN COMPLEX WITH UBIQUITIN</scope>
    <scope>DOMAIN VHS</scope>
    <scope>SUBUNIT</scope>
</reference>
<reference key="21">
    <citation type="journal article" date="2006" name="Science">
        <title>The consensus coding sequences of human breast and colorectal cancers.</title>
        <authorList>
            <person name="Sjoeblom T."/>
            <person name="Jones S."/>
            <person name="Wood L.D."/>
            <person name="Parsons D.W."/>
            <person name="Lin J."/>
            <person name="Barber T.D."/>
            <person name="Mandelker D."/>
            <person name="Leary R.J."/>
            <person name="Ptak J."/>
            <person name="Silliman N."/>
            <person name="Szabo S."/>
            <person name="Buckhaults P."/>
            <person name="Farrell C."/>
            <person name="Meeh P."/>
            <person name="Markowitz S.D."/>
            <person name="Willis J."/>
            <person name="Dawson D."/>
            <person name="Willson J.K.V."/>
            <person name="Gazdar A.F."/>
            <person name="Hartigan J."/>
            <person name="Wu L."/>
            <person name="Liu C."/>
            <person name="Parmigiani G."/>
            <person name="Park B.H."/>
            <person name="Bachman K.E."/>
            <person name="Papadopoulos N."/>
            <person name="Vogelstein B."/>
            <person name="Kinzler K.W."/>
            <person name="Velculescu V.E."/>
        </authorList>
    </citation>
    <scope>VARIANT [LARGE SCALE ANALYSIS] ASP-212</scope>
</reference>
<dbReference type="EMBL" id="U43899">
    <property type="protein sequence ID" value="AAC50734.1"/>
    <property type="molecule type" value="mRNA"/>
</dbReference>
<dbReference type="EMBL" id="EF445033">
    <property type="protein sequence ID" value="ACA06077.1"/>
    <property type="molecule type" value="Genomic_DNA"/>
</dbReference>
<dbReference type="EMBL" id="EF445033">
    <property type="protein sequence ID" value="ACA06078.1"/>
    <property type="molecule type" value="Genomic_DNA"/>
</dbReference>
<dbReference type="EMBL" id="CH471072">
    <property type="protein sequence ID" value="EAW86207.1"/>
    <property type="molecule type" value="Genomic_DNA"/>
</dbReference>
<dbReference type="EMBL" id="CH471072">
    <property type="protein sequence ID" value="EAW86209.1"/>
    <property type="molecule type" value="Genomic_DNA"/>
</dbReference>
<dbReference type="EMBL" id="BC030586">
    <property type="protein sequence ID" value="AAH30586.1"/>
    <property type="molecule type" value="mRNA"/>
</dbReference>
<dbReference type="CCDS" id="CCDS7122.1">
    <molecule id="Q92783-1"/>
</dbReference>
<dbReference type="PIR" id="JC4916">
    <property type="entry name" value="JC4916"/>
</dbReference>
<dbReference type="RefSeq" id="NP_003464.1">
    <molecule id="Q92783-1"/>
    <property type="nucleotide sequence ID" value="NM_003473.4"/>
</dbReference>
<dbReference type="PDB" id="2L0A">
    <property type="method" value="NMR"/>
    <property type="chains" value="A=207-267"/>
</dbReference>
<dbReference type="PDB" id="3F1I">
    <property type="method" value="X-ray"/>
    <property type="resolution" value="2.30 A"/>
    <property type="chains" value="C/S=301-377"/>
</dbReference>
<dbReference type="PDB" id="3LDZ">
    <property type="method" value="X-ray"/>
    <property type="resolution" value="2.60 A"/>
    <property type="chains" value="A/B/C/D=4-143"/>
</dbReference>
<dbReference type="PDBsum" id="2L0A"/>
<dbReference type="PDBsum" id="3F1I"/>
<dbReference type="PDBsum" id="3LDZ"/>
<dbReference type="BMRB" id="Q92783"/>
<dbReference type="SMR" id="Q92783"/>
<dbReference type="BioGRID" id="113722">
    <property type="interactions" value="168"/>
</dbReference>
<dbReference type="ComplexPortal" id="CPX-2825">
    <property type="entry name" value="ESCRT-0 complex, STAM variant"/>
</dbReference>
<dbReference type="CORUM" id="Q92783"/>
<dbReference type="DIP" id="DIP-37761N"/>
<dbReference type="FunCoup" id="Q92783">
    <property type="interactions" value="3918"/>
</dbReference>
<dbReference type="IntAct" id="Q92783">
    <property type="interactions" value="76"/>
</dbReference>
<dbReference type="MINT" id="Q92783"/>
<dbReference type="STRING" id="9606.ENSP00000366746"/>
<dbReference type="GlyGen" id="Q92783">
    <property type="glycosylation" value="1 site, 1 O-linked glycan (1 site)"/>
</dbReference>
<dbReference type="iPTMnet" id="Q92783"/>
<dbReference type="PhosphoSitePlus" id="Q92783"/>
<dbReference type="SwissPalm" id="Q92783"/>
<dbReference type="BioMuta" id="STAM"/>
<dbReference type="DMDM" id="71153545"/>
<dbReference type="jPOST" id="Q92783"/>
<dbReference type="MassIVE" id="Q92783"/>
<dbReference type="PaxDb" id="9606-ENSP00000366746"/>
<dbReference type="PeptideAtlas" id="Q92783"/>
<dbReference type="ProteomicsDB" id="75463">
    <molecule id="Q92783-1"/>
</dbReference>
<dbReference type="ProteomicsDB" id="75464">
    <molecule id="Q92783-2"/>
</dbReference>
<dbReference type="Pumba" id="Q92783"/>
<dbReference type="Antibodypedia" id="25306">
    <property type="antibodies" value="356 antibodies from 34 providers"/>
</dbReference>
<dbReference type="DNASU" id="8027"/>
<dbReference type="Ensembl" id="ENST00000377524.8">
    <molecule id="Q92783-1"/>
    <property type="protein sequence ID" value="ENSP00000366746.3"/>
    <property type="gene ID" value="ENSG00000136738.15"/>
</dbReference>
<dbReference type="GeneID" id="8027"/>
<dbReference type="KEGG" id="hsa:8027"/>
<dbReference type="MANE-Select" id="ENST00000377524.8">
    <property type="protein sequence ID" value="ENSP00000366746.3"/>
    <property type="RefSeq nucleotide sequence ID" value="NM_003473.4"/>
    <property type="RefSeq protein sequence ID" value="NP_003464.1"/>
</dbReference>
<dbReference type="UCSC" id="uc001ipj.3">
    <molecule id="Q92783-1"/>
    <property type="organism name" value="human"/>
</dbReference>
<dbReference type="AGR" id="HGNC:11357"/>
<dbReference type="CTD" id="8027"/>
<dbReference type="DisGeNET" id="8027"/>
<dbReference type="GeneCards" id="STAM"/>
<dbReference type="HGNC" id="HGNC:11357">
    <property type="gene designation" value="STAM"/>
</dbReference>
<dbReference type="HPA" id="ENSG00000136738">
    <property type="expression patterns" value="Tissue enhanced (bone)"/>
</dbReference>
<dbReference type="MIM" id="601899">
    <property type="type" value="gene"/>
</dbReference>
<dbReference type="neXtProt" id="NX_Q92783"/>
<dbReference type="OpenTargets" id="ENSG00000136738"/>
<dbReference type="PharmGKB" id="PA36179"/>
<dbReference type="VEuPathDB" id="HostDB:ENSG00000136738"/>
<dbReference type="eggNOG" id="KOG2199">
    <property type="taxonomic scope" value="Eukaryota"/>
</dbReference>
<dbReference type="GeneTree" id="ENSGT00940000157171"/>
<dbReference type="HOGENOM" id="CLU_010104_0_2_1"/>
<dbReference type="InParanoid" id="Q92783"/>
<dbReference type="OMA" id="QVYRDWW"/>
<dbReference type="OrthoDB" id="10068368at2759"/>
<dbReference type="PAN-GO" id="Q92783">
    <property type="GO annotations" value="2 GO annotations based on evolutionary models"/>
</dbReference>
<dbReference type="PhylomeDB" id="Q92783"/>
<dbReference type="TreeFam" id="TF315007"/>
<dbReference type="PathwayCommons" id="Q92783"/>
<dbReference type="Reactome" id="R-HSA-182971">
    <property type="pathway name" value="EGFR downregulation"/>
</dbReference>
<dbReference type="Reactome" id="R-HSA-5689901">
    <property type="pathway name" value="Metalloprotease DUBs"/>
</dbReference>
<dbReference type="Reactome" id="R-HSA-6807004">
    <property type="pathway name" value="Negative regulation of MET activity"/>
</dbReference>
<dbReference type="Reactome" id="R-HSA-8856825">
    <property type="pathway name" value="Cargo recognition for clathrin-mediated endocytosis"/>
</dbReference>
<dbReference type="Reactome" id="R-HSA-8856828">
    <property type="pathway name" value="Clathrin-mediated endocytosis"/>
</dbReference>
<dbReference type="Reactome" id="R-HSA-8875360">
    <property type="pathway name" value="InlB-mediated entry of Listeria monocytogenes into host cell"/>
</dbReference>
<dbReference type="Reactome" id="R-HSA-9013420">
    <property type="pathway name" value="RHOU GTPase cycle"/>
</dbReference>
<dbReference type="Reactome" id="R-HSA-917729">
    <property type="pathway name" value="Endosomal Sorting Complex Required For Transport (ESCRT)"/>
</dbReference>
<dbReference type="SignaLink" id="Q92783"/>
<dbReference type="SIGNOR" id="Q92783"/>
<dbReference type="BioGRID-ORCS" id="8027">
    <property type="hits" value="29 hits in 1154 CRISPR screens"/>
</dbReference>
<dbReference type="ChiTaRS" id="STAM">
    <property type="organism name" value="human"/>
</dbReference>
<dbReference type="EvolutionaryTrace" id="Q92783"/>
<dbReference type="GeneWiki" id="Signal_transducing_adaptor_molecule"/>
<dbReference type="GenomeRNAi" id="8027"/>
<dbReference type="Pharos" id="Q92783">
    <property type="development level" value="Tbio"/>
</dbReference>
<dbReference type="PRO" id="PR:Q92783"/>
<dbReference type="Proteomes" id="UP000005640">
    <property type="component" value="Chromosome 10"/>
</dbReference>
<dbReference type="RNAct" id="Q92783">
    <property type="molecule type" value="protein"/>
</dbReference>
<dbReference type="Bgee" id="ENSG00000136738">
    <property type="expression patterns" value="Expressed in calcaneal tendon and 205 other cell types or tissues"/>
</dbReference>
<dbReference type="ExpressionAtlas" id="Q92783">
    <property type="expression patterns" value="baseline and differential"/>
</dbReference>
<dbReference type="GO" id="GO:0005829">
    <property type="term" value="C:cytosol"/>
    <property type="evidence" value="ECO:0000314"/>
    <property type="project" value="HPA"/>
</dbReference>
<dbReference type="GO" id="GO:0031901">
    <property type="term" value="C:early endosome membrane"/>
    <property type="evidence" value="ECO:0007669"/>
    <property type="project" value="UniProtKB-SubCell"/>
</dbReference>
<dbReference type="GO" id="GO:0033565">
    <property type="term" value="C:ESCRT-0 complex"/>
    <property type="evidence" value="ECO:0000314"/>
    <property type="project" value="UniProtKB"/>
</dbReference>
<dbReference type="GO" id="GO:0043231">
    <property type="term" value="C:intracellular membrane-bounded organelle"/>
    <property type="evidence" value="ECO:0000314"/>
    <property type="project" value="HPA"/>
</dbReference>
<dbReference type="GO" id="GO:0035091">
    <property type="term" value="F:phosphatidylinositol binding"/>
    <property type="evidence" value="ECO:0007669"/>
    <property type="project" value="InterPro"/>
</dbReference>
<dbReference type="GO" id="GO:0043130">
    <property type="term" value="F:ubiquitin binding"/>
    <property type="evidence" value="ECO:0007669"/>
    <property type="project" value="InterPro"/>
</dbReference>
<dbReference type="GO" id="GO:0044389">
    <property type="term" value="F:ubiquitin-like protein ligase binding"/>
    <property type="evidence" value="ECO:0000353"/>
    <property type="project" value="UniProtKB"/>
</dbReference>
<dbReference type="GO" id="GO:0016236">
    <property type="term" value="P:macroautophagy"/>
    <property type="evidence" value="ECO:0000304"/>
    <property type="project" value="ParkinsonsUK-UCL"/>
</dbReference>
<dbReference type="GO" id="GO:0090148">
    <property type="term" value="P:membrane fission"/>
    <property type="evidence" value="ECO:0000303"/>
    <property type="project" value="ComplexPortal"/>
</dbReference>
<dbReference type="GO" id="GO:0036258">
    <property type="term" value="P:multivesicular body assembly"/>
    <property type="evidence" value="ECO:0000304"/>
    <property type="project" value="ParkinsonsUK-UCL"/>
</dbReference>
<dbReference type="GO" id="GO:1903543">
    <property type="term" value="P:positive regulation of exosomal secretion"/>
    <property type="evidence" value="ECO:0000315"/>
    <property type="project" value="UniProtKB"/>
</dbReference>
<dbReference type="GO" id="GO:0043328">
    <property type="term" value="P:protein transport to vacuole involved in ubiquitin-dependent protein catabolic process via the multivesicular body sorting pathway"/>
    <property type="evidence" value="ECO:0000318"/>
    <property type="project" value="GO_Central"/>
</dbReference>
<dbReference type="GO" id="GO:1903551">
    <property type="term" value="P:regulation of extracellular exosome assembly"/>
    <property type="evidence" value="ECO:0000315"/>
    <property type="project" value="UniProtKB"/>
</dbReference>
<dbReference type="GO" id="GO:0007165">
    <property type="term" value="P:signal transduction"/>
    <property type="evidence" value="ECO:0000304"/>
    <property type="project" value="ProtInc"/>
</dbReference>
<dbReference type="CDD" id="cd21389">
    <property type="entry name" value="GAT_STAM1"/>
    <property type="match status" value="1"/>
</dbReference>
<dbReference type="CDD" id="cd11964">
    <property type="entry name" value="SH3_STAM1"/>
    <property type="match status" value="1"/>
</dbReference>
<dbReference type="CDD" id="cd17000">
    <property type="entry name" value="VHS_STAM1"/>
    <property type="match status" value="1"/>
</dbReference>
<dbReference type="FunFam" id="1.25.40.90:FF:000009">
    <property type="entry name" value="Putative signal transducing adapter molecule 1"/>
    <property type="match status" value="1"/>
</dbReference>
<dbReference type="FunFam" id="1.20.5.1940:FF:000002">
    <property type="entry name" value="Signal transducing adapter molecule 1"/>
    <property type="match status" value="1"/>
</dbReference>
<dbReference type="FunFam" id="2.30.30.40:FF:000086">
    <property type="entry name" value="signal transducing adapter molecule 2"/>
    <property type="match status" value="1"/>
</dbReference>
<dbReference type="Gene3D" id="1.20.5.1940">
    <property type="match status" value="1"/>
</dbReference>
<dbReference type="Gene3D" id="1.25.40.90">
    <property type="match status" value="1"/>
</dbReference>
<dbReference type="Gene3D" id="2.30.30.40">
    <property type="entry name" value="SH3 Domains"/>
    <property type="match status" value="1"/>
</dbReference>
<dbReference type="InterPro" id="IPR008942">
    <property type="entry name" value="ENTH_VHS"/>
</dbReference>
<dbReference type="InterPro" id="IPR047492">
    <property type="entry name" value="GAT_STAM1"/>
</dbReference>
<dbReference type="InterPro" id="IPR036028">
    <property type="entry name" value="SH3-like_dom_sf"/>
</dbReference>
<dbReference type="InterPro" id="IPR001452">
    <property type="entry name" value="SH3_domain"/>
</dbReference>
<dbReference type="InterPro" id="IPR050670">
    <property type="entry name" value="STAM"/>
</dbReference>
<dbReference type="InterPro" id="IPR035657">
    <property type="entry name" value="STAM1_SH3"/>
</dbReference>
<dbReference type="InterPro" id="IPR003903">
    <property type="entry name" value="UIM_dom"/>
</dbReference>
<dbReference type="InterPro" id="IPR002014">
    <property type="entry name" value="VHS_dom"/>
</dbReference>
<dbReference type="InterPro" id="IPR047528">
    <property type="entry name" value="VHS_STAM1"/>
</dbReference>
<dbReference type="PANTHER" id="PTHR45929">
    <property type="entry name" value="JAK PATHWAY SIGNAL TRANSDUCTION ADAPTOR MOLECULE"/>
    <property type="match status" value="1"/>
</dbReference>
<dbReference type="PANTHER" id="PTHR45929:SF2">
    <property type="entry name" value="SIGNAL TRANSDUCING ADAPTER MOLECULE 1"/>
    <property type="match status" value="1"/>
</dbReference>
<dbReference type="Pfam" id="PF00018">
    <property type="entry name" value="SH3_1"/>
    <property type="match status" value="1"/>
</dbReference>
<dbReference type="Pfam" id="PF02809">
    <property type="entry name" value="UIM"/>
    <property type="match status" value="1"/>
</dbReference>
<dbReference type="Pfam" id="PF00790">
    <property type="entry name" value="VHS"/>
    <property type="match status" value="1"/>
</dbReference>
<dbReference type="PRINTS" id="PR00499">
    <property type="entry name" value="P67PHOX"/>
</dbReference>
<dbReference type="PRINTS" id="PR00452">
    <property type="entry name" value="SH3DOMAIN"/>
</dbReference>
<dbReference type="SMART" id="SM00326">
    <property type="entry name" value="SH3"/>
    <property type="match status" value="1"/>
</dbReference>
<dbReference type="SMART" id="SM00288">
    <property type="entry name" value="VHS"/>
    <property type="match status" value="1"/>
</dbReference>
<dbReference type="SUPFAM" id="SSF48464">
    <property type="entry name" value="ENTH/VHS domain"/>
    <property type="match status" value="1"/>
</dbReference>
<dbReference type="SUPFAM" id="SSF50044">
    <property type="entry name" value="SH3-domain"/>
    <property type="match status" value="1"/>
</dbReference>
<dbReference type="PROSITE" id="PS50002">
    <property type="entry name" value="SH3"/>
    <property type="match status" value="1"/>
</dbReference>
<dbReference type="PROSITE" id="PS50330">
    <property type="entry name" value="UIM"/>
    <property type="match status" value="1"/>
</dbReference>
<dbReference type="PROSITE" id="PS50179">
    <property type="entry name" value="VHS"/>
    <property type="match status" value="1"/>
</dbReference>
<gene>
    <name type="primary">STAM</name>
    <name type="synonym">STAM1</name>
</gene>
<accession>Q92783</accession>
<accession>B0YJ99</accession>
<accession>D3DRU5</accession>
<accession>Q8N6D9</accession>
<protein>
    <recommendedName>
        <fullName>Signal transducing adapter molecule 1</fullName>
        <shortName>STAM-1</shortName>
    </recommendedName>
</protein>
<organism>
    <name type="scientific">Homo sapiens</name>
    <name type="common">Human</name>
    <dbReference type="NCBI Taxonomy" id="9606"/>
    <lineage>
        <taxon>Eukaryota</taxon>
        <taxon>Metazoa</taxon>
        <taxon>Chordata</taxon>
        <taxon>Craniata</taxon>
        <taxon>Vertebrata</taxon>
        <taxon>Euteleostomi</taxon>
        <taxon>Mammalia</taxon>
        <taxon>Eutheria</taxon>
        <taxon>Euarchontoglires</taxon>
        <taxon>Primates</taxon>
        <taxon>Haplorrhini</taxon>
        <taxon>Catarrhini</taxon>
        <taxon>Hominidae</taxon>
        <taxon>Homo</taxon>
    </lineage>
</organism>
<keyword id="KW-0002">3D-structure</keyword>
<keyword id="KW-0025">Alternative splicing</keyword>
<keyword id="KW-0963">Cytoplasm</keyword>
<keyword id="KW-0903">Direct protein sequencing</keyword>
<keyword id="KW-0967">Endosome</keyword>
<keyword id="KW-1017">Isopeptide bond</keyword>
<keyword id="KW-0472">Membrane</keyword>
<keyword id="KW-0597">Phosphoprotein</keyword>
<keyword id="KW-0653">Protein transport</keyword>
<keyword id="KW-1267">Proteomics identification</keyword>
<keyword id="KW-1185">Reference proteome</keyword>
<keyword id="KW-0728">SH3 domain</keyword>
<keyword id="KW-0813">Transport</keyword>
<keyword id="KW-0832">Ubl conjugation</keyword>
<evidence type="ECO:0000255" key="1">
    <source>
        <dbReference type="PROSITE-ProRule" id="PRU00192"/>
    </source>
</evidence>
<evidence type="ECO:0000255" key="2">
    <source>
        <dbReference type="PROSITE-ProRule" id="PRU00213"/>
    </source>
</evidence>
<evidence type="ECO:0000255" key="3">
    <source>
        <dbReference type="PROSITE-ProRule" id="PRU00218"/>
    </source>
</evidence>
<evidence type="ECO:0000256" key="4">
    <source>
        <dbReference type="SAM" id="MobiDB-lite"/>
    </source>
</evidence>
<evidence type="ECO:0000269" key="5">
    <source>
    </source>
</evidence>
<evidence type="ECO:0000269" key="6">
    <source>
    </source>
</evidence>
<evidence type="ECO:0000269" key="7">
    <source>
    </source>
</evidence>
<evidence type="ECO:0000269" key="8">
    <source>
    </source>
</evidence>
<evidence type="ECO:0000269" key="9">
    <source>
    </source>
</evidence>
<evidence type="ECO:0000269" key="10">
    <source>
    </source>
</evidence>
<evidence type="ECO:0000269" key="11">
    <source>
    </source>
</evidence>
<evidence type="ECO:0000269" key="12">
    <source>
    </source>
</evidence>
<evidence type="ECO:0000269" key="13">
    <source>
    </source>
</evidence>
<evidence type="ECO:0000269" key="14">
    <source>
    </source>
</evidence>
<evidence type="ECO:0000269" key="15">
    <source>
    </source>
</evidence>
<evidence type="ECO:0000269" key="16">
    <source>
    </source>
</evidence>
<evidence type="ECO:0000303" key="17">
    <source>
    </source>
</evidence>
<evidence type="ECO:0000305" key="18"/>
<evidence type="ECO:0000305" key="19">
    <source>
    </source>
</evidence>
<evidence type="ECO:0000305" key="20">
    <source>
    </source>
</evidence>
<evidence type="ECO:0007744" key="21">
    <source>
    </source>
</evidence>
<evidence type="ECO:0007744" key="22">
    <source>
    </source>
</evidence>
<evidence type="ECO:0007744" key="23">
    <source>
    </source>
</evidence>
<evidence type="ECO:0007829" key="24">
    <source>
        <dbReference type="PDB" id="2L0A"/>
    </source>
</evidence>
<evidence type="ECO:0007829" key="25">
    <source>
        <dbReference type="PDB" id="3F1I"/>
    </source>
</evidence>
<evidence type="ECO:0007829" key="26">
    <source>
        <dbReference type="PDB" id="3LDZ"/>
    </source>
</evidence>
<sequence>MPLFATNPFDQDVEKATSEMNTAEDWGLILDICDKVGQSRTGPKDCLRSIMRRVNHKDPHVAMQALTLLGACVSNCGKIFHLEVCSRDFASEVSNVLNKGHPKVCEKLKALMVEWTDEFKNDPQLSLISAMIKNLKEQGVTFPAIGSQAAEQAKASPALVAKDPGTVANKKEEEDLAKAIELSLKEQRQQSTTLSTLYPSTSSLLTNHQHEGRKVRAIYDFEAAEDNELTFKAGEIITVLDDSDPNWWKGETHQGIGLFPSNFVTADLTAEPEMIKTEKKTVQFSDDVQVETIEPEPEPAFIDEDKMDQLLQMLQSTDPSDDQPDLPELLHLEAMCHQMGPLIDEKLEDIDRKHSELSELNVKVMEALSLYTKLMNEDPMYSMYAKLQNQPYYMQSSGVSGSQVYAGPPPSGAYLVAGNAQMSHLQSYSLPPEQLSSLSQAVVPPSANPALPSQQTQAAYPNTMVSSVQGNTYPSQAPVYSPPPAATAAAATADVTLYQNAGPNMPQVPNYNLTSSTLPQPGGSQQPPQPQQPYSQKALL</sequence>
<proteinExistence type="evidence at protein level"/>
<name>STAM1_HUMAN</name>